<proteinExistence type="evidence at protein level"/>
<sequence>MAFAETYPAASSLPNGDCGRPRARPGGNRVTVVLGAQWGDEGKGKVVDLLAQDADIVCRCQGGNNAGHTVVVDSVEYDFHLLPSGIINPNVTAFIGNGVVIHLPGLFEEAEKNVQKGKGLEGWEKRLIISDRAHIVFDFHQAADGIQEQQRQEQAGKNLGTTKKGIGPVYSSKAARSGLRMCDLVSDFDGFSERFKVLANQYKSIYPTLEIDIEGELQKLKGYMEKIKPMVRDGVYFLYEALHGPPKKILVEGANAALLDIDFGTYPFVTSSNCTVGGVCTGLGMPPQNVGEVYGVVKAYTTRVGIGAFPTEQDNEIGELLQTRGREFGVTTGRKRRCGWLDLVLLKYAHMINGFTALALTKLDILDMFTEIKVGVAYKLDGEIIPHIPANQEVLNKVEVQYKTLPGWNTDISNARAFKELPVNAQNYVRFIEDELQIPVKWIGVGKSRESMIQLF</sequence>
<comment type="function">
    <text evidence="2">Plays an important role in the de novo pathway and in the salvage pathway of purine nucleotide biosynthesis. Catalyzes the first committed step in the biosynthesis of AMP from IMP.</text>
</comment>
<comment type="catalytic activity">
    <reaction evidence="3">
        <text>IMP + L-aspartate + GTP = N(6)-(1,2-dicarboxyethyl)-AMP + GDP + phosphate + 2 H(+)</text>
        <dbReference type="Rhea" id="RHEA:15753"/>
        <dbReference type="ChEBI" id="CHEBI:15378"/>
        <dbReference type="ChEBI" id="CHEBI:29991"/>
        <dbReference type="ChEBI" id="CHEBI:37565"/>
        <dbReference type="ChEBI" id="CHEBI:43474"/>
        <dbReference type="ChEBI" id="CHEBI:57567"/>
        <dbReference type="ChEBI" id="CHEBI:58053"/>
        <dbReference type="ChEBI" id="CHEBI:58189"/>
        <dbReference type="EC" id="6.3.4.4"/>
    </reaction>
</comment>
<comment type="cofactor">
    <cofactor evidence="3">
        <name>Mg(2+)</name>
        <dbReference type="ChEBI" id="CHEBI:18420"/>
    </cofactor>
    <text evidence="3">Binds 1 Mg(2+) ion per subunit.</text>
</comment>
<comment type="activity regulation">
    <text evidence="2">Inhibited competitively by AMP and IMP and non-competitively by fructose 1,6-bisphosphate.</text>
</comment>
<comment type="pathway">
    <text evidence="3">Purine metabolism; AMP biosynthesis via de novo pathway; AMP from IMP: step 1/2.</text>
</comment>
<comment type="subunit">
    <text evidence="3">Homodimer.</text>
</comment>
<comment type="interaction">
    <interactant intactId="EBI-1042898">
        <id>P30520</id>
    </interactant>
    <interactant intactId="EBI-3925250">
        <id>Q8N142</id>
        <label>ADSS1</label>
    </interactant>
    <organismsDiffer>false</organismsDiffer>
    <experiments>3</experiments>
</comment>
<comment type="interaction">
    <interactant intactId="EBI-1042898">
        <id>P30520</id>
    </interactant>
    <interactant intactId="EBI-8463848">
        <id>Q8NB12</id>
        <label>SMYD1</label>
    </interactant>
    <organismsDiffer>false</organismsDiffer>
    <experiments>5</experiments>
</comment>
<comment type="subcellular location">
    <subcellularLocation>
        <location evidence="3">Cytoplasm</location>
    </subcellularLocation>
    <subcellularLocation>
        <location evidence="1">Mitochondrion</location>
    </subcellularLocation>
    <text>Partially associated with particulate fractions.</text>
</comment>
<comment type="similarity">
    <text evidence="3">Belongs to the adenylosuccinate synthetase family.</text>
</comment>
<protein>
    <recommendedName>
        <fullName evidence="3">Adenylosuccinate synthetase isozyme 2</fullName>
        <shortName evidence="3">AMPSase 2</shortName>
        <shortName evidence="3">AdSS 2</shortName>
        <ecNumber evidence="3">6.3.4.4</ecNumber>
    </recommendedName>
    <alternativeName>
        <fullName evidence="3">Adenylosuccinate synthetase, acidic isozyme</fullName>
    </alternativeName>
    <alternativeName>
        <fullName evidence="3">Adenylosuccinate synthetase, liver isozyme</fullName>
        <shortName evidence="3">L-type adenylosuccinate synthetase</shortName>
    </alternativeName>
    <alternativeName>
        <fullName evidence="3">IMP--aspartate ligase 2</fullName>
    </alternativeName>
</protein>
<name>PURA2_HUMAN</name>
<feature type="chain" id="PRO_0000095130" description="Adenylosuccinate synthetase isozyme 2">
    <location>
        <begin position="1"/>
        <end position="456"/>
    </location>
</feature>
<feature type="region of interest" description="Disordered" evidence="4">
    <location>
        <begin position="1"/>
        <end position="24"/>
    </location>
</feature>
<feature type="active site" description="Proton acceptor" evidence="3">
    <location>
        <position position="40"/>
    </location>
</feature>
<feature type="active site" description="Proton donor" evidence="3">
    <location>
        <position position="68"/>
    </location>
</feature>
<feature type="binding site">
    <location>
        <begin position="39"/>
        <end position="45"/>
    </location>
    <ligand>
        <name>GTP</name>
        <dbReference type="ChEBI" id="CHEBI:37565"/>
    </ligand>
</feature>
<feature type="binding site" description="in other chain" evidence="3">
    <location>
        <begin position="40"/>
        <end position="43"/>
    </location>
    <ligand>
        <name>IMP</name>
        <dbReference type="ChEBI" id="CHEBI:58053"/>
        <note>ligand shared between dimeric partners</note>
    </ligand>
</feature>
<feature type="binding site" evidence="3">
    <location>
        <position position="40"/>
    </location>
    <ligand>
        <name>Mg(2+)</name>
        <dbReference type="ChEBI" id="CHEBI:18420"/>
    </ligand>
</feature>
<feature type="binding site" evidence="3">
    <location>
        <position position="40"/>
    </location>
    <ligand>
        <name>substrate</name>
    </ligand>
</feature>
<feature type="binding site" description="in other chain" evidence="3">
    <location>
        <begin position="65"/>
        <end position="68"/>
    </location>
    <ligand>
        <name>IMP</name>
        <dbReference type="ChEBI" id="CHEBI:58053"/>
        <note>ligand shared between dimeric partners</note>
    </ligand>
</feature>
<feature type="binding site">
    <location>
        <begin position="67"/>
        <end position="69"/>
    </location>
    <ligand>
        <name>GTP</name>
        <dbReference type="ChEBI" id="CHEBI:37565"/>
    </ligand>
</feature>
<feature type="binding site" evidence="3">
    <location>
        <position position="67"/>
    </location>
    <ligand>
        <name>Mg(2+)</name>
        <dbReference type="ChEBI" id="CHEBI:18420"/>
    </ligand>
</feature>
<feature type="binding site" description="in other chain" evidence="3">
    <location>
        <position position="162"/>
    </location>
    <ligand>
        <name>IMP</name>
        <dbReference type="ChEBI" id="CHEBI:58053"/>
        <note>ligand shared between dimeric partners</note>
    </ligand>
</feature>
<feature type="binding site" evidence="3">
    <location>
        <position position="176"/>
    </location>
    <ligand>
        <name>IMP</name>
        <dbReference type="ChEBI" id="CHEBI:58053"/>
        <note>ligand shared between dimeric partners</note>
    </ligand>
</feature>
<feature type="binding site" description="in other chain" evidence="3">
    <location>
        <position position="255"/>
    </location>
    <ligand>
        <name>IMP</name>
        <dbReference type="ChEBI" id="CHEBI:58053"/>
        <note>ligand shared between dimeric partners</note>
    </ligand>
</feature>
<feature type="binding site" description="in other chain" evidence="3">
    <location>
        <position position="270"/>
    </location>
    <ligand>
        <name>IMP</name>
        <dbReference type="ChEBI" id="CHEBI:58053"/>
        <note>ligand shared between dimeric partners</note>
    </ligand>
</feature>
<feature type="binding site" evidence="3">
    <location>
        <begin position="330"/>
        <end position="336"/>
    </location>
    <ligand>
        <name>substrate</name>
    </ligand>
</feature>
<feature type="binding site" description="in other chain" evidence="3">
    <location>
        <position position="334"/>
    </location>
    <ligand>
        <name>IMP</name>
        <dbReference type="ChEBI" id="CHEBI:58053"/>
        <note>ligand shared between dimeric partners</note>
    </ligand>
</feature>
<feature type="binding site" evidence="3">
    <location>
        <position position="336"/>
    </location>
    <ligand>
        <name>GTP</name>
        <dbReference type="ChEBI" id="CHEBI:37565"/>
    </ligand>
</feature>
<feature type="binding site">
    <location>
        <begin position="362"/>
        <end position="364"/>
    </location>
    <ligand>
        <name>GTP</name>
        <dbReference type="ChEBI" id="CHEBI:37565"/>
    </ligand>
</feature>
<feature type="binding site">
    <location>
        <begin position="444"/>
        <end position="447"/>
    </location>
    <ligand>
        <name>GTP</name>
        <dbReference type="ChEBI" id="CHEBI:37565"/>
    </ligand>
</feature>
<feature type="sequence variant" id="VAR_051881" description="In dbSNP:rs12134870.">
    <original>L</original>
    <variation>F</variation>
    <location>
        <position position="179"/>
    </location>
</feature>
<feature type="sequence conflict" description="In Ref. 1; CAA47123." evidence="5" ref="1">
    <original>RP</original>
    <variation>A</variation>
    <location>
        <begin position="24"/>
        <end position="25"/>
    </location>
</feature>
<feature type="strand" evidence="7">
    <location>
        <begin position="30"/>
        <end position="39"/>
    </location>
</feature>
<feature type="helix" evidence="7">
    <location>
        <begin position="43"/>
        <end position="51"/>
    </location>
</feature>
<feature type="strand" evidence="7">
    <location>
        <begin position="55"/>
        <end position="59"/>
    </location>
</feature>
<feature type="strand" evidence="7">
    <location>
        <begin position="68"/>
        <end position="72"/>
    </location>
</feature>
<feature type="strand" evidence="7">
    <location>
        <begin position="75"/>
        <end position="82"/>
    </location>
</feature>
<feature type="helix" evidence="7">
    <location>
        <begin position="84"/>
        <end position="87"/>
    </location>
</feature>
<feature type="strand" evidence="7">
    <location>
        <begin position="92"/>
        <end position="95"/>
    </location>
</feature>
<feature type="strand" evidence="7">
    <location>
        <begin position="99"/>
        <end position="102"/>
    </location>
</feature>
<feature type="helix" evidence="7">
    <location>
        <begin position="103"/>
        <end position="116"/>
    </location>
</feature>
<feature type="helix" evidence="7">
    <location>
        <begin position="118"/>
        <end position="120"/>
    </location>
</feature>
<feature type="helix" evidence="7">
    <location>
        <begin position="123"/>
        <end position="125"/>
    </location>
</feature>
<feature type="strand" evidence="7">
    <location>
        <begin position="126"/>
        <end position="130"/>
    </location>
</feature>
<feature type="strand" evidence="7">
    <location>
        <begin position="134"/>
        <end position="136"/>
    </location>
</feature>
<feature type="helix" evidence="7">
    <location>
        <begin position="138"/>
        <end position="149"/>
    </location>
</feature>
<feature type="helix" evidence="7">
    <location>
        <begin position="166"/>
        <end position="174"/>
    </location>
</feature>
<feature type="helix" evidence="7">
    <location>
        <begin position="181"/>
        <end position="184"/>
    </location>
</feature>
<feature type="helix" evidence="7">
    <location>
        <begin position="188"/>
        <end position="205"/>
    </location>
</feature>
<feature type="helix" evidence="7">
    <location>
        <begin position="213"/>
        <end position="227"/>
    </location>
</feature>
<feature type="helix" evidence="7">
    <location>
        <begin position="228"/>
        <end position="230"/>
    </location>
</feature>
<feature type="helix" evidence="7">
    <location>
        <begin position="234"/>
        <end position="243"/>
    </location>
</feature>
<feature type="strand" evidence="7">
    <location>
        <begin position="249"/>
        <end position="252"/>
    </location>
</feature>
<feature type="helix" evidence="7">
    <location>
        <begin position="257"/>
        <end position="259"/>
    </location>
</feature>
<feature type="turn" evidence="7">
    <location>
        <begin position="261"/>
        <end position="263"/>
    </location>
</feature>
<feature type="helix" evidence="7">
    <location>
        <begin position="277"/>
        <end position="283"/>
    </location>
</feature>
<feature type="helix" evidence="7">
    <location>
        <begin position="287"/>
        <end position="289"/>
    </location>
</feature>
<feature type="strand" evidence="7">
    <location>
        <begin position="290"/>
        <end position="307"/>
    </location>
</feature>
<feature type="helix" evidence="7">
    <location>
        <begin position="316"/>
        <end position="324"/>
    </location>
</feature>
<feature type="turn" evidence="7">
    <location>
        <begin position="330"/>
        <end position="332"/>
    </location>
</feature>
<feature type="strand" evidence="7">
    <location>
        <begin position="337"/>
        <end position="339"/>
    </location>
</feature>
<feature type="helix" evidence="7">
    <location>
        <begin position="343"/>
        <end position="353"/>
    </location>
</feature>
<feature type="strand" evidence="7">
    <location>
        <begin position="356"/>
        <end position="361"/>
    </location>
</feature>
<feature type="helix" evidence="7">
    <location>
        <begin position="363"/>
        <end position="368"/>
    </location>
</feature>
<feature type="strand" evidence="7">
    <location>
        <begin position="370"/>
        <end position="380"/>
    </location>
</feature>
<feature type="strand" evidence="7">
    <location>
        <begin position="383"/>
        <end position="387"/>
    </location>
</feature>
<feature type="helix" evidence="7">
    <location>
        <begin position="392"/>
        <end position="395"/>
    </location>
</feature>
<feature type="strand" evidence="7">
    <location>
        <begin position="399"/>
        <end position="406"/>
    </location>
</feature>
<feature type="helix" evidence="7">
    <location>
        <begin position="418"/>
        <end position="420"/>
    </location>
</feature>
<feature type="helix" evidence="7">
    <location>
        <begin position="423"/>
        <end position="436"/>
    </location>
</feature>
<feature type="strand" evidence="7">
    <location>
        <begin position="440"/>
        <end position="444"/>
    </location>
</feature>
<feature type="strand" evidence="7">
    <location>
        <begin position="446"/>
        <end position="448"/>
    </location>
</feature>
<feature type="strand" evidence="7">
    <location>
        <begin position="451"/>
        <end position="454"/>
    </location>
</feature>
<accession>P30520</accession>
<accession>B1AQM5</accession>
<accession>Q96EG7</accession>
<evidence type="ECO:0000250" key="1">
    <source>
        <dbReference type="UniProtKB" id="A4Z6H1"/>
    </source>
</evidence>
<evidence type="ECO:0000250" key="2">
    <source>
        <dbReference type="UniProtKB" id="P46664"/>
    </source>
</evidence>
<evidence type="ECO:0000255" key="3">
    <source>
        <dbReference type="HAMAP-Rule" id="MF_03127"/>
    </source>
</evidence>
<evidence type="ECO:0000256" key="4">
    <source>
        <dbReference type="SAM" id="MobiDB-lite"/>
    </source>
</evidence>
<evidence type="ECO:0000305" key="5"/>
<evidence type="ECO:0000312" key="6">
    <source>
        <dbReference type="HGNC" id="HGNC:292"/>
    </source>
</evidence>
<evidence type="ECO:0007829" key="7">
    <source>
        <dbReference type="PDB" id="2V40"/>
    </source>
</evidence>
<dbReference type="EC" id="6.3.4.4" evidence="3"/>
<dbReference type="EMBL" id="X66503">
    <property type="protein sequence ID" value="CAA47123.1"/>
    <property type="molecule type" value="Genomic_DNA"/>
</dbReference>
<dbReference type="EMBL" id="AL591594">
    <property type="status" value="NOT_ANNOTATED_CDS"/>
    <property type="molecule type" value="Genomic_DNA"/>
</dbReference>
<dbReference type="EMBL" id="AL645465">
    <property type="status" value="NOT_ANNOTATED_CDS"/>
    <property type="molecule type" value="Genomic_DNA"/>
</dbReference>
<dbReference type="EMBL" id="CH471148">
    <property type="protein sequence ID" value="EAW77102.1"/>
    <property type="molecule type" value="Genomic_DNA"/>
</dbReference>
<dbReference type="EMBL" id="BC012356">
    <property type="protein sequence ID" value="AAH12356.1"/>
    <property type="molecule type" value="mRNA"/>
</dbReference>
<dbReference type="CCDS" id="CCDS1624.1"/>
<dbReference type="PIR" id="S21166">
    <property type="entry name" value="S21166"/>
</dbReference>
<dbReference type="RefSeq" id="NP_001117.2">
    <property type="nucleotide sequence ID" value="NM_001126.3"/>
</dbReference>
<dbReference type="PDB" id="2V40">
    <property type="method" value="X-ray"/>
    <property type="resolution" value="1.90 A"/>
    <property type="chains" value="A=21-456"/>
</dbReference>
<dbReference type="PDBsum" id="2V40"/>
<dbReference type="SMR" id="P30520"/>
<dbReference type="BioGRID" id="106668">
    <property type="interactions" value="122"/>
</dbReference>
<dbReference type="FunCoup" id="P30520">
    <property type="interactions" value="2761"/>
</dbReference>
<dbReference type="IntAct" id="P30520">
    <property type="interactions" value="26"/>
</dbReference>
<dbReference type="MINT" id="P30520"/>
<dbReference type="STRING" id="9606.ENSP00000355493"/>
<dbReference type="BindingDB" id="P30520"/>
<dbReference type="ChEMBL" id="CHEMBL4875"/>
<dbReference type="DrugBank" id="DB00787">
    <property type="generic name" value="Acyclovir"/>
</dbReference>
<dbReference type="DrugBank" id="DB05540">
    <property type="generic name" value="Alanosine"/>
</dbReference>
<dbReference type="DrugBank" id="DB00128">
    <property type="generic name" value="Aspartic acid"/>
</dbReference>
<dbReference type="GlyCosmos" id="P30520">
    <property type="glycosylation" value="2 sites, 1 glycan"/>
</dbReference>
<dbReference type="GlyGen" id="P30520">
    <property type="glycosylation" value="2 sites, 1 O-linked glycan (2 sites)"/>
</dbReference>
<dbReference type="iPTMnet" id="P30520"/>
<dbReference type="MetOSite" id="P30520"/>
<dbReference type="PhosphoSitePlus" id="P30520"/>
<dbReference type="SwissPalm" id="P30520"/>
<dbReference type="BioMuta" id="ADSS"/>
<dbReference type="DMDM" id="21264498"/>
<dbReference type="CPTAC" id="CPTAC-163"/>
<dbReference type="CPTAC" id="CPTAC-164"/>
<dbReference type="jPOST" id="P30520"/>
<dbReference type="MassIVE" id="P30520"/>
<dbReference type="PaxDb" id="9606-ENSP00000355493"/>
<dbReference type="PeptideAtlas" id="P30520"/>
<dbReference type="ProteomicsDB" id="54711"/>
<dbReference type="Pumba" id="P30520"/>
<dbReference type="Antibodypedia" id="20829">
    <property type="antibodies" value="157 antibodies from 24 providers"/>
</dbReference>
<dbReference type="DNASU" id="159"/>
<dbReference type="Ensembl" id="ENST00000366535.4">
    <property type="protein sequence ID" value="ENSP00000355493.3"/>
    <property type="gene ID" value="ENSG00000035687.10"/>
</dbReference>
<dbReference type="GeneID" id="159"/>
<dbReference type="KEGG" id="hsa:159"/>
<dbReference type="MANE-Select" id="ENST00000366535.4">
    <property type="protein sequence ID" value="ENSP00000355493.3"/>
    <property type="RefSeq nucleotide sequence ID" value="NM_001126.5"/>
    <property type="RefSeq protein sequence ID" value="NP_001117.2"/>
</dbReference>
<dbReference type="UCSC" id="uc001iaj.4">
    <property type="organism name" value="human"/>
</dbReference>
<dbReference type="AGR" id="HGNC:292"/>
<dbReference type="CTD" id="159"/>
<dbReference type="DisGeNET" id="159"/>
<dbReference type="GeneCards" id="ADSS2"/>
<dbReference type="HGNC" id="HGNC:292">
    <property type="gene designation" value="ADSS2"/>
</dbReference>
<dbReference type="HPA" id="ENSG00000035687">
    <property type="expression patterns" value="Low tissue specificity"/>
</dbReference>
<dbReference type="MIM" id="103060">
    <property type="type" value="gene"/>
</dbReference>
<dbReference type="neXtProt" id="NX_P30520"/>
<dbReference type="OpenTargets" id="ENSG00000035687"/>
<dbReference type="PharmGKB" id="PA24601"/>
<dbReference type="VEuPathDB" id="HostDB:ENSG00000035687"/>
<dbReference type="eggNOG" id="KOG1355">
    <property type="taxonomic scope" value="Eukaryota"/>
</dbReference>
<dbReference type="GeneTree" id="ENSGT00390000015553"/>
<dbReference type="HOGENOM" id="CLU_029848_3_0_1"/>
<dbReference type="InParanoid" id="P30520"/>
<dbReference type="OMA" id="FHHAKPI"/>
<dbReference type="OrthoDB" id="10265645at2759"/>
<dbReference type="PAN-GO" id="P30520">
    <property type="GO annotations" value="4 GO annotations based on evolutionary models"/>
</dbReference>
<dbReference type="PhylomeDB" id="P30520"/>
<dbReference type="TreeFam" id="TF300486"/>
<dbReference type="PathwayCommons" id="P30520"/>
<dbReference type="Reactome" id="R-HSA-73817">
    <property type="pathway name" value="Purine ribonucleoside monophosphate biosynthesis"/>
</dbReference>
<dbReference type="SignaLink" id="P30520"/>
<dbReference type="SIGNOR" id="P30520"/>
<dbReference type="UniPathway" id="UPA00075">
    <property type="reaction ID" value="UER00335"/>
</dbReference>
<dbReference type="BioGRID-ORCS" id="159">
    <property type="hits" value="347 hits in 1148 CRISPR screens"/>
</dbReference>
<dbReference type="ChiTaRS" id="ADSS">
    <property type="organism name" value="human"/>
</dbReference>
<dbReference type="EvolutionaryTrace" id="P30520"/>
<dbReference type="GenomeRNAi" id="159"/>
<dbReference type="Pharos" id="P30520">
    <property type="development level" value="Tchem"/>
</dbReference>
<dbReference type="PRO" id="PR:P30520"/>
<dbReference type="Proteomes" id="UP000005640">
    <property type="component" value="Chromosome 1"/>
</dbReference>
<dbReference type="RNAct" id="P30520">
    <property type="molecule type" value="protein"/>
</dbReference>
<dbReference type="Bgee" id="ENSG00000035687">
    <property type="expression patterns" value="Expressed in monocyte and 201 other cell types or tissues"/>
</dbReference>
<dbReference type="ExpressionAtlas" id="P30520">
    <property type="expression patterns" value="baseline and differential"/>
</dbReference>
<dbReference type="GO" id="GO:0005737">
    <property type="term" value="C:cytoplasm"/>
    <property type="evidence" value="ECO:0000318"/>
    <property type="project" value="GO_Central"/>
</dbReference>
<dbReference type="GO" id="GO:0005829">
    <property type="term" value="C:cytosol"/>
    <property type="evidence" value="ECO:0000304"/>
    <property type="project" value="Reactome"/>
</dbReference>
<dbReference type="GO" id="GO:0070062">
    <property type="term" value="C:extracellular exosome"/>
    <property type="evidence" value="ECO:0007005"/>
    <property type="project" value="UniProtKB"/>
</dbReference>
<dbReference type="GO" id="GO:0005739">
    <property type="term" value="C:mitochondrion"/>
    <property type="evidence" value="ECO:0000250"/>
    <property type="project" value="UniProtKB"/>
</dbReference>
<dbReference type="GO" id="GO:0004019">
    <property type="term" value="F:adenylosuccinate synthase activity"/>
    <property type="evidence" value="ECO:0000314"/>
    <property type="project" value="UniProtKB"/>
</dbReference>
<dbReference type="GO" id="GO:0005525">
    <property type="term" value="F:GTP binding"/>
    <property type="evidence" value="ECO:0000303"/>
    <property type="project" value="UniProtKB"/>
</dbReference>
<dbReference type="GO" id="GO:0000287">
    <property type="term" value="F:magnesium ion binding"/>
    <property type="evidence" value="ECO:0007669"/>
    <property type="project" value="UniProtKB-UniRule"/>
</dbReference>
<dbReference type="GO" id="GO:0042301">
    <property type="term" value="F:phosphate ion binding"/>
    <property type="evidence" value="ECO:0000303"/>
    <property type="project" value="UniProtKB"/>
</dbReference>
<dbReference type="GO" id="GO:0044208">
    <property type="term" value="P:'de novo' AMP biosynthetic process"/>
    <property type="evidence" value="ECO:0000314"/>
    <property type="project" value="MGI"/>
</dbReference>
<dbReference type="GO" id="GO:0006167">
    <property type="term" value="P:AMP biosynthetic process"/>
    <property type="evidence" value="ECO:0000314"/>
    <property type="project" value="UniProtKB"/>
</dbReference>
<dbReference type="GO" id="GO:0006531">
    <property type="term" value="P:aspartate metabolic process"/>
    <property type="evidence" value="ECO:0007669"/>
    <property type="project" value="Ensembl"/>
</dbReference>
<dbReference type="GO" id="GO:0071257">
    <property type="term" value="P:cellular response to electrical stimulus"/>
    <property type="evidence" value="ECO:0007669"/>
    <property type="project" value="Ensembl"/>
</dbReference>
<dbReference type="GO" id="GO:0002376">
    <property type="term" value="P:immune system process"/>
    <property type="evidence" value="ECO:0000303"/>
    <property type="project" value="UniProtKB"/>
</dbReference>
<dbReference type="GO" id="GO:0046040">
    <property type="term" value="P:IMP metabolic process"/>
    <property type="evidence" value="ECO:0000318"/>
    <property type="project" value="GO_Central"/>
</dbReference>
<dbReference type="GO" id="GO:0060359">
    <property type="term" value="P:response to ammonium ion"/>
    <property type="evidence" value="ECO:0007669"/>
    <property type="project" value="Ensembl"/>
</dbReference>
<dbReference type="GO" id="GO:0014074">
    <property type="term" value="P:response to purine-containing compound"/>
    <property type="evidence" value="ECO:0007669"/>
    <property type="project" value="Ensembl"/>
</dbReference>
<dbReference type="CDD" id="cd03108">
    <property type="entry name" value="AdSS"/>
    <property type="match status" value="1"/>
</dbReference>
<dbReference type="FunFam" id="3.90.170.10:FF:000001">
    <property type="entry name" value="Adenylosuccinate synthetase"/>
    <property type="match status" value="1"/>
</dbReference>
<dbReference type="FunFam" id="1.10.300.10:FF:000002">
    <property type="entry name" value="Adenylosuccinate synthetase, chloroplastic"/>
    <property type="match status" value="1"/>
</dbReference>
<dbReference type="Gene3D" id="3.40.440.10">
    <property type="entry name" value="Adenylosuccinate Synthetase, subunit A, domain 1"/>
    <property type="match status" value="1"/>
</dbReference>
<dbReference type="Gene3D" id="1.10.300.10">
    <property type="entry name" value="Adenylosuccinate Synthetase, subunit A, domain 2"/>
    <property type="match status" value="1"/>
</dbReference>
<dbReference type="Gene3D" id="3.90.170.10">
    <property type="entry name" value="Adenylosuccinate Synthetase, subunit A, domain 3"/>
    <property type="match status" value="1"/>
</dbReference>
<dbReference type="HAMAP" id="MF_00011">
    <property type="entry name" value="Adenylosucc_synth"/>
    <property type="match status" value="1"/>
</dbReference>
<dbReference type="HAMAP" id="MF_03127">
    <property type="entry name" value="Adenylosucc_synth_vert_acid"/>
    <property type="match status" value="1"/>
</dbReference>
<dbReference type="InterPro" id="IPR018220">
    <property type="entry name" value="Adenylosuccin_syn_GTP-bd"/>
</dbReference>
<dbReference type="InterPro" id="IPR033128">
    <property type="entry name" value="Adenylosuccin_syn_Lys_AS"/>
</dbReference>
<dbReference type="InterPro" id="IPR042109">
    <property type="entry name" value="Adenylosuccinate_synth_dom1"/>
</dbReference>
<dbReference type="InterPro" id="IPR042110">
    <property type="entry name" value="Adenylosuccinate_synth_dom2"/>
</dbReference>
<dbReference type="InterPro" id="IPR042111">
    <property type="entry name" value="Adenylosuccinate_synth_dom3"/>
</dbReference>
<dbReference type="InterPro" id="IPR001114">
    <property type="entry name" value="Adenylosuccinate_synthetase"/>
</dbReference>
<dbReference type="InterPro" id="IPR027529">
    <property type="entry name" value="AdSS_2_vert"/>
</dbReference>
<dbReference type="InterPro" id="IPR027417">
    <property type="entry name" value="P-loop_NTPase"/>
</dbReference>
<dbReference type="NCBIfam" id="NF002223">
    <property type="entry name" value="PRK01117.1"/>
    <property type="match status" value="1"/>
</dbReference>
<dbReference type="NCBIfam" id="TIGR00184">
    <property type="entry name" value="purA"/>
    <property type="match status" value="1"/>
</dbReference>
<dbReference type="PANTHER" id="PTHR11846">
    <property type="entry name" value="ADENYLOSUCCINATE SYNTHETASE"/>
    <property type="match status" value="1"/>
</dbReference>
<dbReference type="PANTHER" id="PTHR11846:SF13">
    <property type="entry name" value="ADENYLOSUCCINATE SYNTHETASE ISOZYME 2"/>
    <property type="match status" value="1"/>
</dbReference>
<dbReference type="Pfam" id="PF00709">
    <property type="entry name" value="Adenylsucc_synt"/>
    <property type="match status" value="1"/>
</dbReference>
<dbReference type="SMART" id="SM00788">
    <property type="entry name" value="Adenylsucc_synt"/>
    <property type="match status" value="1"/>
</dbReference>
<dbReference type="SUPFAM" id="SSF52540">
    <property type="entry name" value="P-loop containing nucleoside triphosphate hydrolases"/>
    <property type="match status" value="1"/>
</dbReference>
<dbReference type="PROSITE" id="PS01266">
    <property type="entry name" value="ADENYLOSUCCIN_SYN_1"/>
    <property type="match status" value="1"/>
</dbReference>
<dbReference type="PROSITE" id="PS00513">
    <property type="entry name" value="ADENYLOSUCCIN_SYN_2"/>
    <property type="match status" value="1"/>
</dbReference>
<keyword id="KW-0002">3D-structure</keyword>
<keyword id="KW-0963">Cytoplasm</keyword>
<keyword id="KW-0342">GTP-binding</keyword>
<keyword id="KW-0436">Ligase</keyword>
<keyword id="KW-0460">Magnesium</keyword>
<keyword id="KW-0479">Metal-binding</keyword>
<keyword id="KW-0496">Mitochondrion</keyword>
<keyword id="KW-0547">Nucleotide-binding</keyword>
<keyword id="KW-1267">Proteomics identification</keyword>
<keyword id="KW-0658">Purine biosynthesis</keyword>
<keyword id="KW-1185">Reference proteome</keyword>
<reference key="1">
    <citation type="journal article" date="1992" name="FEBS Lett.">
        <title>Cloning and characterization of the cDNA encoding human adenylosuccinate synthetase.</title>
        <authorList>
            <person name="Powell S.M."/>
            <person name="Zalkin H."/>
            <person name="Dixon J.E."/>
        </authorList>
    </citation>
    <scope>NUCLEOTIDE SEQUENCE [GENOMIC DNA]</scope>
    <source>
        <tissue>Liver</tissue>
    </source>
</reference>
<reference key="2">
    <citation type="submission" date="1993-11" db="EMBL/GenBank/DDBJ databases">
        <authorList>
            <person name="Stone R.L."/>
        </authorList>
    </citation>
    <scope>SEQUENCE REVISION</scope>
</reference>
<reference key="3">
    <citation type="journal article" date="2006" name="Nature">
        <title>The DNA sequence and biological annotation of human chromosome 1.</title>
        <authorList>
            <person name="Gregory S.G."/>
            <person name="Barlow K.F."/>
            <person name="McLay K.E."/>
            <person name="Kaul R."/>
            <person name="Swarbreck D."/>
            <person name="Dunham A."/>
            <person name="Scott C.E."/>
            <person name="Howe K.L."/>
            <person name="Woodfine K."/>
            <person name="Spencer C.C.A."/>
            <person name="Jones M.C."/>
            <person name="Gillson C."/>
            <person name="Searle S."/>
            <person name="Zhou Y."/>
            <person name="Kokocinski F."/>
            <person name="McDonald L."/>
            <person name="Evans R."/>
            <person name="Phillips K."/>
            <person name="Atkinson A."/>
            <person name="Cooper R."/>
            <person name="Jones C."/>
            <person name="Hall R.E."/>
            <person name="Andrews T.D."/>
            <person name="Lloyd C."/>
            <person name="Ainscough R."/>
            <person name="Almeida J.P."/>
            <person name="Ambrose K.D."/>
            <person name="Anderson F."/>
            <person name="Andrew R.W."/>
            <person name="Ashwell R.I.S."/>
            <person name="Aubin K."/>
            <person name="Babbage A.K."/>
            <person name="Bagguley C.L."/>
            <person name="Bailey J."/>
            <person name="Beasley H."/>
            <person name="Bethel G."/>
            <person name="Bird C.P."/>
            <person name="Bray-Allen S."/>
            <person name="Brown J.Y."/>
            <person name="Brown A.J."/>
            <person name="Buckley D."/>
            <person name="Burton J."/>
            <person name="Bye J."/>
            <person name="Carder C."/>
            <person name="Chapman J.C."/>
            <person name="Clark S.Y."/>
            <person name="Clarke G."/>
            <person name="Clee C."/>
            <person name="Cobley V."/>
            <person name="Collier R.E."/>
            <person name="Corby N."/>
            <person name="Coville G.J."/>
            <person name="Davies J."/>
            <person name="Deadman R."/>
            <person name="Dunn M."/>
            <person name="Earthrowl M."/>
            <person name="Ellington A.G."/>
            <person name="Errington H."/>
            <person name="Frankish A."/>
            <person name="Frankland J."/>
            <person name="French L."/>
            <person name="Garner P."/>
            <person name="Garnett J."/>
            <person name="Gay L."/>
            <person name="Ghori M.R.J."/>
            <person name="Gibson R."/>
            <person name="Gilby L.M."/>
            <person name="Gillett W."/>
            <person name="Glithero R.J."/>
            <person name="Grafham D.V."/>
            <person name="Griffiths C."/>
            <person name="Griffiths-Jones S."/>
            <person name="Grocock R."/>
            <person name="Hammond S."/>
            <person name="Harrison E.S.I."/>
            <person name="Hart E."/>
            <person name="Haugen E."/>
            <person name="Heath P.D."/>
            <person name="Holmes S."/>
            <person name="Holt K."/>
            <person name="Howden P.J."/>
            <person name="Hunt A.R."/>
            <person name="Hunt S.E."/>
            <person name="Hunter G."/>
            <person name="Isherwood J."/>
            <person name="James R."/>
            <person name="Johnson C."/>
            <person name="Johnson D."/>
            <person name="Joy A."/>
            <person name="Kay M."/>
            <person name="Kershaw J.K."/>
            <person name="Kibukawa M."/>
            <person name="Kimberley A.M."/>
            <person name="King A."/>
            <person name="Knights A.J."/>
            <person name="Lad H."/>
            <person name="Laird G."/>
            <person name="Lawlor S."/>
            <person name="Leongamornlert D.A."/>
            <person name="Lloyd D.M."/>
            <person name="Loveland J."/>
            <person name="Lovell J."/>
            <person name="Lush M.J."/>
            <person name="Lyne R."/>
            <person name="Martin S."/>
            <person name="Mashreghi-Mohammadi M."/>
            <person name="Matthews L."/>
            <person name="Matthews N.S.W."/>
            <person name="McLaren S."/>
            <person name="Milne S."/>
            <person name="Mistry S."/>
            <person name="Moore M.J.F."/>
            <person name="Nickerson T."/>
            <person name="O'Dell C.N."/>
            <person name="Oliver K."/>
            <person name="Palmeiri A."/>
            <person name="Palmer S.A."/>
            <person name="Parker A."/>
            <person name="Patel D."/>
            <person name="Pearce A.V."/>
            <person name="Peck A.I."/>
            <person name="Pelan S."/>
            <person name="Phelps K."/>
            <person name="Phillimore B.J."/>
            <person name="Plumb R."/>
            <person name="Rajan J."/>
            <person name="Raymond C."/>
            <person name="Rouse G."/>
            <person name="Saenphimmachak C."/>
            <person name="Sehra H.K."/>
            <person name="Sheridan E."/>
            <person name="Shownkeen R."/>
            <person name="Sims S."/>
            <person name="Skuce C.D."/>
            <person name="Smith M."/>
            <person name="Steward C."/>
            <person name="Subramanian S."/>
            <person name="Sycamore N."/>
            <person name="Tracey A."/>
            <person name="Tromans A."/>
            <person name="Van Helmond Z."/>
            <person name="Wall M."/>
            <person name="Wallis J.M."/>
            <person name="White S."/>
            <person name="Whitehead S.L."/>
            <person name="Wilkinson J.E."/>
            <person name="Willey D.L."/>
            <person name="Williams H."/>
            <person name="Wilming L."/>
            <person name="Wray P.W."/>
            <person name="Wu Z."/>
            <person name="Coulson A."/>
            <person name="Vaudin M."/>
            <person name="Sulston J.E."/>
            <person name="Durbin R.M."/>
            <person name="Hubbard T."/>
            <person name="Wooster R."/>
            <person name="Dunham I."/>
            <person name="Carter N.P."/>
            <person name="McVean G."/>
            <person name="Ross M.T."/>
            <person name="Harrow J."/>
            <person name="Olson M.V."/>
            <person name="Beck S."/>
            <person name="Rogers J."/>
            <person name="Bentley D.R."/>
        </authorList>
    </citation>
    <scope>NUCLEOTIDE SEQUENCE [LARGE SCALE GENOMIC DNA]</scope>
</reference>
<reference key="4">
    <citation type="submission" date="2005-07" db="EMBL/GenBank/DDBJ databases">
        <authorList>
            <person name="Mural R.J."/>
            <person name="Istrail S."/>
            <person name="Sutton G.G."/>
            <person name="Florea L."/>
            <person name="Halpern A.L."/>
            <person name="Mobarry C.M."/>
            <person name="Lippert R."/>
            <person name="Walenz B."/>
            <person name="Shatkay H."/>
            <person name="Dew I."/>
            <person name="Miller J.R."/>
            <person name="Flanigan M.J."/>
            <person name="Edwards N.J."/>
            <person name="Bolanos R."/>
            <person name="Fasulo D."/>
            <person name="Halldorsson B.V."/>
            <person name="Hannenhalli S."/>
            <person name="Turner R."/>
            <person name="Yooseph S."/>
            <person name="Lu F."/>
            <person name="Nusskern D.R."/>
            <person name="Shue B.C."/>
            <person name="Zheng X.H."/>
            <person name="Zhong F."/>
            <person name="Delcher A.L."/>
            <person name="Huson D.H."/>
            <person name="Kravitz S.A."/>
            <person name="Mouchard L."/>
            <person name="Reinert K."/>
            <person name="Remington K.A."/>
            <person name="Clark A.G."/>
            <person name="Waterman M.S."/>
            <person name="Eichler E.E."/>
            <person name="Adams M.D."/>
            <person name="Hunkapiller M.W."/>
            <person name="Myers E.W."/>
            <person name="Venter J.C."/>
        </authorList>
    </citation>
    <scope>NUCLEOTIDE SEQUENCE [LARGE SCALE GENOMIC DNA]</scope>
</reference>
<reference key="5">
    <citation type="journal article" date="2004" name="Genome Res.">
        <title>The status, quality, and expansion of the NIH full-length cDNA project: the Mammalian Gene Collection (MGC).</title>
        <authorList>
            <consortium name="The MGC Project Team"/>
        </authorList>
    </citation>
    <scope>NUCLEOTIDE SEQUENCE [LARGE SCALE MRNA]</scope>
    <source>
        <tissue>Eye</tissue>
    </source>
</reference>
<reference key="6">
    <citation type="journal article" date="2011" name="BMC Syst. Biol.">
        <title>Initial characterization of the human central proteome.</title>
        <authorList>
            <person name="Burkard T.R."/>
            <person name="Planyavsky M."/>
            <person name="Kaupe I."/>
            <person name="Breitwieser F.P."/>
            <person name="Buerckstuemmer T."/>
            <person name="Bennett K.L."/>
            <person name="Superti-Furga G."/>
            <person name="Colinge J."/>
        </authorList>
    </citation>
    <scope>IDENTIFICATION BY MASS SPECTROMETRY [LARGE SCALE ANALYSIS]</scope>
</reference>
<reference key="7">
    <citation type="journal article" date="2014" name="J. Proteomics">
        <title>An enzyme assisted RP-RPLC approach for in-depth analysis of human liver phosphoproteome.</title>
        <authorList>
            <person name="Bian Y."/>
            <person name="Song C."/>
            <person name="Cheng K."/>
            <person name="Dong M."/>
            <person name="Wang F."/>
            <person name="Huang J."/>
            <person name="Sun D."/>
            <person name="Wang L."/>
            <person name="Ye M."/>
            <person name="Zou H."/>
        </authorList>
    </citation>
    <scope>IDENTIFICATION BY MASS SPECTROMETRY [LARGE SCALE ANALYSIS]</scope>
    <source>
        <tissue>Liver</tissue>
    </source>
</reference>
<reference key="8">
    <citation type="submission" date="2009-02" db="PDB data bank">
        <title>Human adenylosuccinate synthetase isozyme 2 in complex with GDP.</title>
        <authorList>
            <consortium name="Structural genomics consortium (SGC)"/>
        </authorList>
    </citation>
    <scope>X-RAY CRYSTALLOGRAPHY (1.9 ANGSTROMS) OF 21-456 IN COMPLEX WITH GDP</scope>
</reference>
<organism>
    <name type="scientific">Homo sapiens</name>
    <name type="common">Human</name>
    <dbReference type="NCBI Taxonomy" id="9606"/>
    <lineage>
        <taxon>Eukaryota</taxon>
        <taxon>Metazoa</taxon>
        <taxon>Chordata</taxon>
        <taxon>Craniata</taxon>
        <taxon>Vertebrata</taxon>
        <taxon>Euteleostomi</taxon>
        <taxon>Mammalia</taxon>
        <taxon>Eutheria</taxon>
        <taxon>Euarchontoglires</taxon>
        <taxon>Primates</taxon>
        <taxon>Haplorrhini</taxon>
        <taxon>Catarrhini</taxon>
        <taxon>Hominidae</taxon>
        <taxon>Homo</taxon>
    </lineage>
</organism>
<gene>
    <name evidence="6" type="primary">ADSS2</name>
    <name evidence="3" type="synonym">ADSS</name>
</gene>